<reference key="1">
    <citation type="journal article" date="2004" name="Proc. Natl. Acad. Sci. U.S.A.">
        <title>Genome sequence of the enterobacterial phytopathogen Erwinia carotovora subsp. atroseptica and characterization of virulence factors.</title>
        <authorList>
            <person name="Bell K.S."/>
            <person name="Sebaihia M."/>
            <person name="Pritchard L."/>
            <person name="Holden M.T.G."/>
            <person name="Hyman L.J."/>
            <person name="Holeva M.C."/>
            <person name="Thomson N.R."/>
            <person name="Bentley S.D."/>
            <person name="Churcher L.J.C."/>
            <person name="Mungall K."/>
            <person name="Atkin R."/>
            <person name="Bason N."/>
            <person name="Brooks K."/>
            <person name="Chillingworth T."/>
            <person name="Clark K."/>
            <person name="Doggett J."/>
            <person name="Fraser A."/>
            <person name="Hance Z."/>
            <person name="Hauser H."/>
            <person name="Jagels K."/>
            <person name="Moule S."/>
            <person name="Norbertczak H."/>
            <person name="Ormond D."/>
            <person name="Price C."/>
            <person name="Quail M.A."/>
            <person name="Sanders M."/>
            <person name="Walker D."/>
            <person name="Whitehead S."/>
            <person name="Salmond G.P.C."/>
            <person name="Birch P.R.J."/>
            <person name="Parkhill J."/>
            <person name="Toth I.K."/>
        </authorList>
    </citation>
    <scope>NUCLEOTIDE SEQUENCE [LARGE SCALE GENOMIC DNA]</scope>
    <source>
        <strain>SCRI 1043 / ATCC BAA-672</strain>
    </source>
</reference>
<accession>Q6D3L8</accession>
<gene>
    <name evidence="1" type="primary">nfo</name>
    <name type="ordered locus">ECA2726</name>
</gene>
<comment type="function">
    <text evidence="1">Endonuclease IV plays a role in DNA repair. It cleaves phosphodiester bonds at apurinic or apyrimidinic (AP) sites, generating a 3'-hydroxyl group and a 5'-terminal sugar phosphate.</text>
</comment>
<comment type="catalytic activity">
    <reaction evidence="1">
        <text>Endonucleolytic cleavage to 5'-phosphooligonucleotide end-products.</text>
        <dbReference type="EC" id="3.1.21.2"/>
    </reaction>
</comment>
<comment type="cofactor">
    <cofactor evidence="1">
        <name>Zn(2+)</name>
        <dbReference type="ChEBI" id="CHEBI:29105"/>
    </cofactor>
    <text evidence="1">Binds 3 Zn(2+) ions.</text>
</comment>
<comment type="similarity">
    <text evidence="1">Belongs to the AP endonuclease 2 family.</text>
</comment>
<proteinExistence type="inferred from homology"/>
<evidence type="ECO:0000255" key="1">
    <source>
        <dbReference type="HAMAP-Rule" id="MF_00152"/>
    </source>
</evidence>
<organism>
    <name type="scientific">Pectobacterium atrosepticum (strain SCRI 1043 / ATCC BAA-672)</name>
    <name type="common">Erwinia carotovora subsp. atroseptica</name>
    <dbReference type="NCBI Taxonomy" id="218491"/>
    <lineage>
        <taxon>Bacteria</taxon>
        <taxon>Pseudomonadati</taxon>
        <taxon>Pseudomonadota</taxon>
        <taxon>Gammaproteobacteria</taxon>
        <taxon>Enterobacterales</taxon>
        <taxon>Pectobacteriaceae</taxon>
        <taxon>Pectobacterium</taxon>
    </lineage>
</organism>
<protein>
    <recommendedName>
        <fullName evidence="1">Probable endonuclease 4</fullName>
        <ecNumber evidence="1">3.1.21.2</ecNumber>
    </recommendedName>
    <alternativeName>
        <fullName evidence="1">Endodeoxyribonuclease IV</fullName>
    </alternativeName>
    <alternativeName>
        <fullName evidence="1">Endonuclease IV</fullName>
    </alternativeName>
</protein>
<keyword id="KW-0227">DNA damage</keyword>
<keyword id="KW-0234">DNA repair</keyword>
<keyword id="KW-0255">Endonuclease</keyword>
<keyword id="KW-0378">Hydrolase</keyword>
<keyword id="KW-0479">Metal-binding</keyword>
<keyword id="KW-0540">Nuclease</keyword>
<keyword id="KW-1185">Reference proteome</keyword>
<keyword id="KW-0862">Zinc</keyword>
<dbReference type="EC" id="3.1.21.2" evidence="1"/>
<dbReference type="EMBL" id="BX950851">
    <property type="protein sequence ID" value="CAG75626.1"/>
    <property type="molecule type" value="Genomic_DNA"/>
</dbReference>
<dbReference type="RefSeq" id="WP_011094267.1">
    <property type="nucleotide sequence ID" value="NC_004547.2"/>
</dbReference>
<dbReference type="SMR" id="Q6D3L8"/>
<dbReference type="STRING" id="218491.ECA2726"/>
<dbReference type="KEGG" id="eca:ECA2726"/>
<dbReference type="PATRIC" id="fig|218491.5.peg.2761"/>
<dbReference type="eggNOG" id="COG0648">
    <property type="taxonomic scope" value="Bacteria"/>
</dbReference>
<dbReference type="HOGENOM" id="CLU_025885_0_4_6"/>
<dbReference type="OrthoDB" id="9805666at2"/>
<dbReference type="Proteomes" id="UP000007966">
    <property type="component" value="Chromosome"/>
</dbReference>
<dbReference type="GO" id="GO:0008833">
    <property type="term" value="F:deoxyribonuclease IV (phage-T4-induced) activity"/>
    <property type="evidence" value="ECO:0007669"/>
    <property type="project" value="UniProtKB-UniRule"/>
</dbReference>
<dbReference type="GO" id="GO:0003677">
    <property type="term" value="F:DNA binding"/>
    <property type="evidence" value="ECO:0007669"/>
    <property type="project" value="InterPro"/>
</dbReference>
<dbReference type="GO" id="GO:0003906">
    <property type="term" value="F:DNA-(apurinic or apyrimidinic site) endonuclease activity"/>
    <property type="evidence" value="ECO:0007669"/>
    <property type="project" value="TreeGrafter"/>
</dbReference>
<dbReference type="GO" id="GO:0008081">
    <property type="term" value="F:phosphoric diester hydrolase activity"/>
    <property type="evidence" value="ECO:0007669"/>
    <property type="project" value="TreeGrafter"/>
</dbReference>
<dbReference type="GO" id="GO:0008270">
    <property type="term" value="F:zinc ion binding"/>
    <property type="evidence" value="ECO:0007669"/>
    <property type="project" value="UniProtKB-UniRule"/>
</dbReference>
<dbReference type="GO" id="GO:0006284">
    <property type="term" value="P:base-excision repair"/>
    <property type="evidence" value="ECO:0007669"/>
    <property type="project" value="TreeGrafter"/>
</dbReference>
<dbReference type="CDD" id="cd00019">
    <property type="entry name" value="AP2Ec"/>
    <property type="match status" value="1"/>
</dbReference>
<dbReference type="FunFam" id="3.20.20.150:FF:000001">
    <property type="entry name" value="Probable endonuclease 4"/>
    <property type="match status" value="1"/>
</dbReference>
<dbReference type="Gene3D" id="3.20.20.150">
    <property type="entry name" value="Divalent-metal-dependent TIM barrel enzymes"/>
    <property type="match status" value="1"/>
</dbReference>
<dbReference type="HAMAP" id="MF_00152">
    <property type="entry name" value="Nfo"/>
    <property type="match status" value="1"/>
</dbReference>
<dbReference type="InterPro" id="IPR001719">
    <property type="entry name" value="AP_endonuc_2"/>
</dbReference>
<dbReference type="InterPro" id="IPR018246">
    <property type="entry name" value="AP_endonuc_F2_Zn_BS"/>
</dbReference>
<dbReference type="InterPro" id="IPR036237">
    <property type="entry name" value="Xyl_isomerase-like_sf"/>
</dbReference>
<dbReference type="InterPro" id="IPR013022">
    <property type="entry name" value="Xyl_isomerase-like_TIM-brl"/>
</dbReference>
<dbReference type="NCBIfam" id="TIGR00587">
    <property type="entry name" value="nfo"/>
    <property type="match status" value="1"/>
</dbReference>
<dbReference type="NCBIfam" id="NF002199">
    <property type="entry name" value="PRK01060.1-4"/>
    <property type="match status" value="1"/>
</dbReference>
<dbReference type="PANTHER" id="PTHR21445:SF0">
    <property type="entry name" value="APURINIC-APYRIMIDINIC ENDONUCLEASE"/>
    <property type="match status" value="1"/>
</dbReference>
<dbReference type="PANTHER" id="PTHR21445">
    <property type="entry name" value="ENDONUCLEASE IV ENDODEOXYRIBONUCLEASE IV"/>
    <property type="match status" value="1"/>
</dbReference>
<dbReference type="Pfam" id="PF01261">
    <property type="entry name" value="AP_endonuc_2"/>
    <property type="match status" value="1"/>
</dbReference>
<dbReference type="SMART" id="SM00518">
    <property type="entry name" value="AP2Ec"/>
    <property type="match status" value="1"/>
</dbReference>
<dbReference type="SUPFAM" id="SSF51658">
    <property type="entry name" value="Xylose isomerase-like"/>
    <property type="match status" value="1"/>
</dbReference>
<dbReference type="PROSITE" id="PS00729">
    <property type="entry name" value="AP_NUCLEASE_F2_1"/>
    <property type="match status" value="1"/>
</dbReference>
<dbReference type="PROSITE" id="PS00730">
    <property type="entry name" value="AP_NUCLEASE_F2_2"/>
    <property type="match status" value="1"/>
</dbReference>
<dbReference type="PROSITE" id="PS00731">
    <property type="entry name" value="AP_NUCLEASE_F2_3"/>
    <property type="match status" value="1"/>
</dbReference>
<dbReference type="PROSITE" id="PS51432">
    <property type="entry name" value="AP_NUCLEASE_F2_4"/>
    <property type="match status" value="1"/>
</dbReference>
<feature type="chain" id="PRO_0000190842" description="Probable endonuclease 4">
    <location>
        <begin position="1"/>
        <end position="281"/>
    </location>
</feature>
<feature type="binding site" evidence="1">
    <location>
        <position position="69"/>
    </location>
    <ligand>
        <name>Zn(2+)</name>
        <dbReference type="ChEBI" id="CHEBI:29105"/>
        <label>1</label>
    </ligand>
</feature>
<feature type="binding site" evidence="1">
    <location>
        <position position="109"/>
    </location>
    <ligand>
        <name>Zn(2+)</name>
        <dbReference type="ChEBI" id="CHEBI:29105"/>
        <label>1</label>
    </ligand>
</feature>
<feature type="binding site" evidence="1">
    <location>
        <position position="145"/>
    </location>
    <ligand>
        <name>Zn(2+)</name>
        <dbReference type="ChEBI" id="CHEBI:29105"/>
        <label>1</label>
    </ligand>
</feature>
<feature type="binding site" evidence="1">
    <location>
        <position position="145"/>
    </location>
    <ligand>
        <name>Zn(2+)</name>
        <dbReference type="ChEBI" id="CHEBI:29105"/>
        <label>2</label>
    </ligand>
</feature>
<feature type="binding site" evidence="1">
    <location>
        <position position="179"/>
    </location>
    <ligand>
        <name>Zn(2+)</name>
        <dbReference type="ChEBI" id="CHEBI:29105"/>
        <label>2</label>
    </ligand>
</feature>
<feature type="binding site" evidence="1">
    <location>
        <position position="182"/>
    </location>
    <ligand>
        <name>Zn(2+)</name>
        <dbReference type="ChEBI" id="CHEBI:29105"/>
        <label>3</label>
    </ligand>
</feature>
<feature type="binding site" evidence="1">
    <location>
        <position position="216"/>
    </location>
    <ligand>
        <name>Zn(2+)</name>
        <dbReference type="ChEBI" id="CHEBI:29105"/>
        <label>2</label>
    </ligand>
</feature>
<feature type="binding site" evidence="1">
    <location>
        <position position="229"/>
    </location>
    <ligand>
        <name>Zn(2+)</name>
        <dbReference type="ChEBI" id="CHEBI:29105"/>
        <label>3</label>
    </ligand>
</feature>
<feature type="binding site" evidence="1">
    <location>
        <position position="231"/>
    </location>
    <ligand>
        <name>Zn(2+)</name>
        <dbReference type="ChEBI" id="CHEBI:29105"/>
        <label>3</label>
    </ligand>
</feature>
<feature type="binding site" evidence="1">
    <location>
        <position position="261"/>
    </location>
    <ligand>
        <name>Zn(2+)</name>
        <dbReference type="ChEBI" id="CHEBI:29105"/>
        <label>2</label>
    </ligand>
</feature>
<sequence length="281" mass="30972">MKYIGAHVSAAGGVDQAVIRAHEIKATAFALFTKNQRQWQAAPLSTEVIDRFKAACEQYAYMSAQILPHDSYLINLGHPDGEALEKSRIAFIDEMSRCQLLGLSLLNFHPGSHLKQIEEADCLARIAESINIALAETDGVTAVIENTAGQGSNLGFRFEHLAAIIDGVEDKSRVGVCIDTCHAFAGGYDLRTEADCEATFAEFDRIVGFRYLRGMHLNDAKSAFGSRVDRHHSLGEGNIGKTAFSYIMKDTRFDGIPMILETVNPDIWADEIAWLKSEAQY</sequence>
<name>END4_PECAS</name>